<protein>
    <recommendedName>
        <fullName evidence="1">Large ribosomal subunit protein bL19</fullName>
    </recommendedName>
    <alternativeName>
        <fullName evidence="2">50S ribosomal protein L19</fullName>
    </alternativeName>
</protein>
<keyword id="KW-0687">Ribonucleoprotein</keyword>
<keyword id="KW-0689">Ribosomal protein</keyword>
<organism>
    <name type="scientific">Acinetobacter baylyi (strain ATCC 33305 / BD413 / ADP1)</name>
    <dbReference type="NCBI Taxonomy" id="62977"/>
    <lineage>
        <taxon>Bacteria</taxon>
        <taxon>Pseudomonadati</taxon>
        <taxon>Pseudomonadota</taxon>
        <taxon>Gammaproteobacteria</taxon>
        <taxon>Moraxellales</taxon>
        <taxon>Moraxellaceae</taxon>
        <taxon>Acinetobacter</taxon>
    </lineage>
</organism>
<reference key="1">
    <citation type="journal article" date="2004" name="Nucleic Acids Res.">
        <title>Unique features revealed by the genome sequence of Acinetobacter sp. ADP1, a versatile and naturally transformation competent bacterium.</title>
        <authorList>
            <person name="Barbe V."/>
            <person name="Vallenet D."/>
            <person name="Fonknechten N."/>
            <person name="Kreimeyer A."/>
            <person name="Oztas S."/>
            <person name="Labarre L."/>
            <person name="Cruveiller S."/>
            <person name="Robert C."/>
            <person name="Duprat S."/>
            <person name="Wincker P."/>
            <person name="Ornston L.N."/>
            <person name="Weissenbach J."/>
            <person name="Marliere P."/>
            <person name="Cohen G.N."/>
            <person name="Medigue C."/>
        </authorList>
    </citation>
    <scope>NUCLEOTIDE SEQUENCE [LARGE SCALE GENOMIC DNA]</scope>
    <source>
        <strain>ATCC 33305 / BD413 / ADP1</strain>
    </source>
</reference>
<sequence length="123" mass="13660">MSGKHPLVQAVENAQLKSDIPAFAPGDTVIVQVKVKEGDRERLQAFEGVVIAKKNRGLNSAFTVRKISSGVGVERVFQTHSPVVAKIEVKRRGDVRRAKLYYLRELSGKAARIREKLPARKRG</sequence>
<proteinExistence type="inferred from homology"/>
<comment type="function">
    <text evidence="1">This protein is located at the 30S-50S ribosomal subunit interface and may play a role in the structure and function of the aminoacyl-tRNA binding site.</text>
</comment>
<comment type="similarity">
    <text evidence="1">Belongs to the bacterial ribosomal protein bL19 family.</text>
</comment>
<evidence type="ECO:0000255" key="1">
    <source>
        <dbReference type="HAMAP-Rule" id="MF_00402"/>
    </source>
</evidence>
<evidence type="ECO:0000305" key="2"/>
<accession>Q6F7I2</accession>
<gene>
    <name evidence="1" type="primary">rplS</name>
    <name type="ordered locus">ACIAD3310</name>
</gene>
<name>RL19_ACIAD</name>
<dbReference type="EMBL" id="CR543861">
    <property type="protein sequence ID" value="CAG69983.1"/>
    <property type="molecule type" value="Genomic_DNA"/>
</dbReference>
<dbReference type="RefSeq" id="WP_004923849.1">
    <property type="nucleotide sequence ID" value="NC_005966.1"/>
</dbReference>
<dbReference type="SMR" id="Q6F7I2"/>
<dbReference type="STRING" id="202950.GCA_001485005_02154"/>
<dbReference type="GeneID" id="45235511"/>
<dbReference type="KEGG" id="aci:ACIAD3310"/>
<dbReference type="eggNOG" id="COG0335">
    <property type="taxonomic scope" value="Bacteria"/>
</dbReference>
<dbReference type="HOGENOM" id="CLU_103507_2_2_6"/>
<dbReference type="OrthoDB" id="9803541at2"/>
<dbReference type="BioCyc" id="ASP62977:ACIAD_RS14980-MONOMER"/>
<dbReference type="Proteomes" id="UP000000430">
    <property type="component" value="Chromosome"/>
</dbReference>
<dbReference type="GO" id="GO:0022625">
    <property type="term" value="C:cytosolic large ribosomal subunit"/>
    <property type="evidence" value="ECO:0007669"/>
    <property type="project" value="TreeGrafter"/>
</dbReference>
<dbReference type="GO" id="GO:0003735">
    <property type="term" value="F:structural constituent of ribosome"/>
    <property type="evidence" value="ECO:0007669"/>
    <property type="project" value="InterPro"/>
</dbReference>
<dbReference type="GO" id="GO:0006412">
    <property type="term" value="P:translation"/>
    <property type="evidence" value="ECO:0007669"/>
    <property type="project" value="UniProtKB-UniRule"/>
</dbReference>
<dbReference type="FunFam" id="2.30.30.790:FF:000001">
    <property type="entry name" value="50S ribosomal protein L19"/>
    <property type="match status" value="1"/>
</dbReference>
<dbReference type="Gene3D" id="2.30.30.790">
    <property type="match status" value="1"/>
</dbReference>
<dbReference type="HAMAP" id="MF_00402">
    <property type="entry name" value="Ribosomal_bL19"/>
    <property type="match status" value="1"/>
</dbReference>
<dbReference type="InterPro" id="IPR001857">
    <property type="entry name" value="Ribosomal_bL19"/>
</dbReference>
<dbReference type="InterPro" id="IPR018257">
    <property type="entry name" value="Ribosomal_bL19_CS"/>
</dbReference>
<dbReference type="InterPro" id="IPR038657">
    <property type="entry name" value="Ribosomal_bL19_sf"/>
</dbReference>
<dbReference type="InterPro" id="IPR008991">
    <property type="entry name" value="Translation_prot_SH3-like_sf"/>
</dbReference>
<dbReference type="NCBIfam" id="TIGR01024">
    <property type="entry name" value="rplS_bact"/>
    <property type="match status" value="1"/>
</dbReference>
<dbReference type="PANTHER" id="PTHR15680:SF9">
    <property type="entry name" value="LARGE RIBOSOMAL SUBUNIT PROTEIN BL19M"/>
    <property type="match status" value="1"/>
</dbReference>
<dbReference type="PANTHER" id="PTHR15680">
    <property type="entry name" value="RIBOSOMAL PROTEIN L19"/>
    <property type="match status" value="1"/>
</dbReference>
<dbReference type="Pfam" id="PF01245">
    <property type="entry name" value="Ribosomal_L19"/>
    <property type="match status" value="1"/>
</dbReference>
<dbReference type="PIRSF" id="PIRSF002191">
    <property type="entry name" value="Ribosomal_L19"/>
    <property type="match status" value="1"/>
</dbReference>
<dbReference type="PRINTS" id="PR00061">
    <property type="entry name" value="RIBOSOMALL19"/>
</dbReference>
<dbReference type="SUPFAM" id="SSF50104">
    <property type="entry name" value="Translation proteins SH3-like domain"/>
    <property type="match status" value="1"/>
</dbReference>
<dbReference type="PROSITE" id="PS01015">
    <property type="entry name" value="RIBOSOMAL_L19"/>
    <property type="match status" value="1"/>
</dbReference>
<feature type="chain" id="PRO_0000163398" description="Large ribosomal subunit protein bL19">
    <location>
        <begin position="1"/>
        <end position="123"/>
    </location>
</feature>